<gene>
    <name type="primary">pol</name>
    <name type="ordered locus">bbp_382</name>
</gene>
<organism>
    <name type="scientific">Buchnera aphidicola subsp. Baizongia pistaciae (strain Bp)</name>
    <dbReference type="NCBI Taxonomy" id="224915"/>
    <lineage>
        <taxon>Bacteria</taxon>
        <taxon>Pseudomonadati</taxon>
        <taxon>Pseudomonadota</taxon>
        <taxon>Gammaproteobacteria</taxon>
        <taxon>Enterobacterales</taxon>
        <taxon>Erwiniaceae</taxon>
        <taxon>Buchnera</taxon>
    </lineage>
</organism>
<keyword id="KW-0238">DNA-binding</keyword>
<keyword id="KW-0269">Exonuclease</keyword>
<keyword id="KW-0378">Hydrolase</keyword>
<keyword id="KW-0540">Nuclease</keyword>
<keyword id="KW-1185">Reference proteome</keyword>
<comment type="function">
    <text evidence="1">5'-3' exonuclease acting preferentially on double-stranded DNA.</text>
</comment>
<proteinExistence type="inferred from homology"/>
<feature type="chain" id="PRO_0000101285" description="5'-3' exonuclease">
    <location>
        <begin position="1"/>
        <end position="302"/>
    </location>
</feature>
<feature type="domain" description="5'-3' exonuclease" evidence="2">
    <location>
        <begin position="173"/>
        <end position="269"/>
    </location>
</feature>
<evidence type="ECO:0000250" key="1"/>
<evidence type="ECO:0000255" key="2"/>
<name>EX53_BUCBP</name>
<accession>Q89AD1</accession>
<protein>
    <recommendedName>
        <fullName>5'-3' exonuclease</fullName>
        <ecNumber>3.1.11.-</ecNumber>
    </recommendedName>
</protein>
<sequence length="302" mass="34883">MIIYKKNVNYLLIDGTSYLYRAYYAFLKFKNNFNKPCGAIYGMLNMLRSMLLKYPYSNIVVIFDSPQKTFRNELFIPYKKNRPKMPNDLKEQILPIHHIIKHIGIPIISIPHVEADDIIGTLATKLYKKKYFILISTNDKDLAQLVNIHIHVLIGTSNIVLDESKVKKKYGIIPKLIPDLLGLMGDNSDNIPGVPTVGKKTALILLKTFGSLENIYNNIEKIPKCLIKKAKTIYNNLHTYKKLAFLSQKLATIKTDINVNITTKKIKMLPPCTTEISNFFLHYKFYNWNKLLKQGLWLKNCK</sequence>
<dbReference type="EC" id="3.1.11.-"/>
<dbReference type="EMBL" id="AE016826">
    <property type="protein sequence ID" value="AAO27094.1"/>
    <property type="molecule type" value="Genomic_DNA"/>
</dbReference>
<dbReference type="RefSeq" id="WP_011091495.1">
    <property type="nucleotide sequence ID" value="NC_004545.1"/>
</dbReference>
<dbReference type="SMR" id="Q89AD1"/>
<dbReference type="STRING" id="224915.bbp_382"/>
<dbReference type="KEGG" id="bab:bbp_382"/>
<dbReference type="eggNOG" id="COG0258">
    <property type="taxonomic scope" value="Bacteria"/>
</dbReference>
<dbReference type="HOGENOM" id="CLU_004675_1_0_6"/>
<dbReference type="OrthoDB" id="9806424at2"/>
<dbReference type="Proteomes" id="UP000000601">
    <property type="component" value="Chromosome"/>
</dbReference>
<dbReference type="GO" id="GO:0008409">
    <property type="term" value="F:5'-3' exonuclease activity"/>
    <property type="evidence" value="ECO:0007669"/>
    <property type="project" value="InterPro"/>
</dbReference>
<dbReference type="GO" id="GO:0017108">
    <property type="term" value="F:5'-flap endonuclease activity"/>
    <property type="evidence" value="ECO:0007669"/>
    <property type="project" value="InterPro"/>
</dbReference>
<dbReference type="GO" id="GO:0003677">
    <property type="term" value="F:DNA binding"/>
    <property type="evidence" value="ECO:0007669"/>
    <property type="project" value="UniProtKB-KW"/>
</dbReference>
<dbReference type="GO" id="GO:0033567">
    <property type="term" value="P:DNA replication, Okazaki fragment processing"/>
    <property type="evidence" value="ECO:0007669"/>
    <property type="project" value="InterPro"/>
</dbReference>
<dbReference type="CDD" id="cd09898">
    <property type="entry name" value="H3TH_53EXO"/>
    <property type="match status" value="1"/>
</dbReference>
<dbReference type="CDD" id="cd09859">
    <property type="entry name" value="PIN_53EXO"/>
    <property type="match status" value="1"/>
</dbReference>
<dbReference type="FunFam" id="1.10.150.20:FF:000003">
    <property type="entry name" value="DNA polymerase I"/>
    <property type="match status" value="1"/>
</dbReference>
<dbReference type="Gene3D" id="1.10.150.20">
    <property type="entry name" value="5' to 3' exonuclease, C-terminal subdomain"/>
    <property type="match status" value="1"/>
</dbReference>
<dbReference type="Gene3D" id="3.40.50.1010">
    <property type="entry name" value="5'-nuclease"/>
    <property type="match status" value="1"/>
</dbReference>
<dbReference type="InterPro" id="IPR020046">
    <property type="entry name" value="5-3_exonucl_a-hlix_arch_N"/>
</dbReference>
<dbReference type="InterPro" id="IPR002421">
    <property type="entry name" value="5-3_exonuclease"/>
</dbReference>
<dbReference type="InterPro" id="IPR036279">
    <property type="entry name" value="5-3_exonuclease_C_sf"/>
</dbReference>
<dbReference type="InterPro" id="IPR020045">
    <property type="entry name" value="DNA_polI_H3TH"/>
</dbReference>
<dbReference type="InterPro" id="IPR038969">
    <property type="entry name" value="FEN"/>
</dbReference>
<dbReference type="InterPro" id="IPR008918">
    <property type="entry name" value="HhH2"/>
</dbReference>
<dbReference type="InterPro" id="IPR029060">
    <property type="entry name" value="PIN-like_dom_sf"/>
</dbReference>
<dbReference type="NCBIfam" id="NF011545">
    <property type="entry name" value="PRK14976.1-2"/>
    <property type="match status" value="1"/>
</dbReference>
<dbReference type="PANTHER" id="PTHR42646:SF2">
    <property type="entry name" value="5'-3' EXONUCLEASE FAMILY PROTEIN"/>
    <property type="match status" value="1"/>
</dbReference>
<dbReference type="PANTHER" id="PTHR42646">
    <property type="entry name" value="FLAP ENDONUCLEASE XNI"/>
    <property type="match status" value="1"/>
</dbReference>
<dbReference type="Pfam" id="PF01367">
    <property type="entry name" value="5_3_exonuc"/>
    <property type="match status" value="1"/>
</dbReference>
<dbReference type="Pfam" id="PF02739">
    <property type="entry name" value="5_3_exonuc_N"/>
    <property type="match status" value="1"/>
</dbReference>
<dbReference type="SMART" id="SM00475">
    <property type="entry name" value="53EXOc"/>
    <property type="match status" value="1"/>
</dbReference>
<dbReference type="SMART" id="SM00279">
    <property type="entry name" value="HhH2"/>
    <property type="match status" value="1"/>
</dbReference>
<dbReference type="SUPFAM" id="SSF47807">
    <property type="entry name" value="5' to 3' exonuclease, C-terminal subdomain"/>
    <property type="match status" value="1"/>
</dbReference>
<dbReference type="SUPFAM" id="SSF88723">
    <property type="entry name" value="PIN domain-like"/>
    <property type="match status" value="1"/>
</dbReference>
<reference key="1">
    <citation type="journal article" date="2003" name="Proc. Natl. Acad. Sci. U.S.A.">
        <title>Reductive genome evolution in Buchnera aphidicola.</title>
        <authorList>
            <person name="van Ham R.C.H.J."/>
            <person name="Kamerbeek J."/>
            <person name="Palacios C."/>
            <person name="Rausell C."/>
            <person name="Abascal F."/>
            <person name="Bastolla U."/>
            <person name="Fernandez J.M."/>
            <person name="Jimenez L."/>
            <person name="Postigo M."/>
            <person name="Silva F.J."/>
            <person name="Tamames J."/>
            <person name="Viguera E."/>
            <person name="Latorre A."/>
            <person name="Valencia A."/>
            <person name="Moran F."/>
            <person name="Moya A."/>
        </authorList>
    </citation>
    <scope>NUCLEOTIDE SEQUENCE [LARGE SCALE GENOMIC DNA]</scope>
    <source>
        <strain>Bp</strain>
    </source>
</reference>